<dbReference type="EC" id="6.3.2.9" evidence="1 2"/>
<dbReference type="EMBL" id="CP000253">
    <property type="protein sequence ID" value="ABD30257.1"/>
    <property type="molecule type" value="Genomic_DNA"/>
</dbReference>
<dbReference type="RefSeq" id="WP_000935991.1">
    <property type="nucleotide sequence ID" value="NZ_LS483365.1"/>
</dbReference>
<dbReference type="RefSeq" id="YP_499689.1">
    <property type="nucleotide sequence ID" value="NC_007795.1"/>
</dbReference>
<dbReference type="SMR" id="Q2FZ92"/>
<dbReference type="STRING" id="93061.SAOUHSC_01147"/>
<dbReference type="PaxDb" id="1280-SAXN108_1181"/>
<dbReference type="GeneID" id="3920707"/>
<dbReference type="KEGG" id="sao:SAOUHSC_01147"/>
<dbReference type="PATRIC" id="fig|93061.5.peg.1052"/>
<dbReference type="eggNOG" id="COG0771">
    <property type="taxonomic scope" value="Bacteria"/>
</dbReference>
<dbReference type="HOGENOM" id="CLU_032540_0_1_9"/>
<dbReference type="OrthoDB" id="9809796at2"/>
<dbReference type="UniPathway" id="UPA00219"/>
<dbReference type="PRO" id="PR:Q2FZ92"/>
<dbReference type="Proteomes" id="UP000008816">
    <property type="component" value="Chromosome"/>
</dbReference>
<dbReference type="GO" id="GO:0005737">
    <property type="term" value="C:cytoplasm"/>
    <property type="evidence" value="ECO:0007669"/>
    <property type="project" value="UniProtKB-SubCell"/>
</dbReference>
<dbReference type="GO" id="GO:0005524">
    <property type="term" value="F:ATP binding"/>
    <property type="evidence" value="ECO:0007669"/>
    <property type="project" value="UniProtKB-UniRule"/>
</dbReference>
<dbReference type="GO" id="GO:0008764">
    <property type="term" value="F:UDP-N-acetylmuramoylalanine-D-glutamate ligase activity"/>
    <property type="evidence" value="ECO:0007669"/>
    <property type="project" value="UniProtKB-UniRule"/>
</dbReference>
<dbReference type="GO" id="GO:0051301">
    <property type="term" value="P:cell division"/>
    <property type="evidence" value="ECO:0007669"/>
    <property type="project" value="UniProtKB-KW"/>
</dbReference>
<dbReference type="GO" id="GO:0071555">
    <property type="term" value="P:cell wall organization"/>
    <property type="evidence" value="ECO:0007669"/>
    <property type="project" value="UniProtKB-KW"/>
</dbReference>
<dbReference type="GO" id="GO:0009252">
    <property type="term" value="P:peptidoglycan biosynthetic process"/>
    <property type="evidence" value="ECO:0007669"/>
    <property type="project" value="UniProtKB-UniRule"/>
</dbReference>
<dbReference type="GO" id="GO:0008360">
    <property type="term" value="P:regulation of cell shape"/>
    <property type="evidence" value="ECO:0007669"/>
    <property type="project" value="UniProtKB-KW"/>
</dbReference>
<dbReference type="Gene3D" id="3.90.190.20">
    <property type="entry name" value="Mur ligase, C-terminal domain"/>
    <property type="match status" value="1"/>
</dbReference>
<dbReference type="Gene3D" id="3.40.1190.10">
    <property type="entry name" value="Mur-like, catalytic domain"/>
    <property type="match status" value="1"/>
</dbReference>
<dbReference type="Gene3D" id="3.40.50.720">
    <property type="entry name" value="NAD(P)-binding Rossmann-like Domain"/>
    <property type="match status" value="1"/>
</dbReference>
<dbReference type="HAMAP" id="MF_00639">
    <property type="entry name" value="MurD"/>
    <property type="match status" value="1"/>
</dbReference>
<dbReference type="InterPro" id="IPR036565">
    <property type="entry name" value="Mur-like_cat_sf"/>
</dbReference>
<dbReference type="InterPro" id="IPR004101">
    <property type="entry name" value="Mur_ligase_C"/>
</dbReference>
<dbReference type="InterPro" id="IPR036615">
    <property type="entry name" value="Mur_ligase_C_dom_sf"/>
</dbReference>
<dbReference type="InterPro" id="IPR013221">
    <property type="entry name" value="Mur_ligase_cen"/>
</dbReference>
<dbReference type="InterPro" id="IPR005762">
    <property type="entry name" value="MurD"/>
</dbReference>
<dbReference type="NCBIfam" id="TIGR01087">
    <property type="entry name" value="murD"/>
    <property type="match status" value="1"/>
</dbReference>
<dbReference type="PANTHER" id="PTHR43692">
    <property type="entry name" value="UDP-N-ACETYLMURAMOYLALANINE--D-GLUTAMATE LIGASE"/>
    <property type="match status" value="1"/>
</dbReference>
<dbReference type="PANTHER" id="PTHR43692:SF1">
    <property type="entry name" value="UDP-N-ACETYLMURAMOYLALANINE--D-GLUTAMATE LIGASE"/>
    <property type="match status" value="1"/>
</dbReference>
<dbReference type="Pfam" id="PF02875">
    <property type="entry name" value="Mur_ligase_C"/>
    <property type="match status" value="1"/>
</dbReference>
<dbReference type="Pfam" id="PF08245">
    <property type="entry name" value="Mur_ligase_M"/>
    <property type="match status" value="1"/>
</dbReference>
<dbReference type="Pfam" id="PF21799">
    <property type="entry name" value="MurD-like_N"/>
    <property type="match status" value="1"/>
</dbReference>
<dbReference type="SUPFAM" id="SSF51984">
    <property type="entry name" value="MurCD N-terminal domain"/>
    <property type="match status" value="1"/>
</dbReference>
<dbReference type="SUPFAM" id="SSF53623">
    <property type="entry name" value="MurD-like peptide ligases, catalytic domain"/>
    <property type="match status" value="1"/>
</dbReference>
<dbReference type="SUPFAM" id="SSF53244">
    <property type="entry name" value="MurD-like peptide ligases, peptide-binding domain"/>
    <property type="match status" value="1"/>
</dbReference>
<gene>
    <name evidence="1 3" type="primary">murD</name>
    <name type="ordered locus">SAOUHSC_01147</name>
</gene>
<feature type="chain" id="PRO_0000257243" description="UDP-N-acetylmuramoylalanine--D-glutamate ligase">
    <location>
        <begin position="1"/>
        <end position="449"/>
    </location>
</feature>
<feature type="binding site" evidence="1">
    <location>
        <begin position="118"/>
        <end position="124"/>
    </location>
    <ligand>
        <name>ATP</name>
        <dbReference type="ChEBI" id="CHEBI:30616"/>
    </ligand>
</feature>
<protein>
    <recommendedName>
        <fullName evidence="1">UDP-N-acetylmuramoylalanine--D-glutamate ligase</fullName>
        <ecNumber evidence="1 2">6.3.2.9</ecNumber>
    </recommendedName>
    <alternativeName>
        <fullName evidence="1">D-glutamic acid-adding enzyme</fullName>
    </alternativeName>
    <alternativeName>
        <fullName evidence="1">UDP-N-acetylmuramoyl-L-alanyl-D-glutamate synthetase</fullName>
    </alternativeName>
</protein>
<evidence type="ECO:0000255" key="1">
    <source>
        <dbReference type="HAMAP-Rule" id="MF_00639"/>
    </source>
</evidence>
<evidence type="ECO:0000269" key="2">
    <source>
    </source>
</evidence>
<evidence type="ECO:0000303" key="3">
    <source>
    </source>
</evidence>
<accession>Q2FZ92</accession>
<name>MURD_STAA8</name>
<proteinExistence type="evidence at protein level"/>
<reference key="1">
    <citation type="book" date="2006" name="Gram positive pathogens, 2nd edition">
        <title>The Staphylococcus aureus NCTC 8325 genome.</title>
        <editorList>
            <person name="Fischetti V."/>
            <person name="Novick R."/>
            <person name="Ferretti J."/>
            <person name="Portnoy D."/>
            <person name="Rood J."/>
        </editorList>
        <authorList>
            <person name="Gillaspy A.F."/>
            <person name="Worrell V."/>
            <person name="Orvis J."/>
            <person name="Roe B.A."/>
            <person name="Dyer D.W."/>
            <person name="Iandolo J.J."/>
        </authorList>
    </citation>
    <scope>NUCLEOTIDE SEQUENCE [LARGE SCALE GENOMIC DNA]</scope>
    <source>
        <strain>NCTC 8325 / PS 47</strain>
    </source>
</reference>
<reference key="2">
    <citation type="journal article" date="2010" name="Biochimie">
        <title>Purification and biochemical characterization of Mur ligases from Staphylococcus aureus.</title>
        <authorList>
            <person name="Patin D."/>
            <person name="Boniface A."/>
            <person name="Kovac A."/>
            <person name="Herve M."/>
            <person name="Dementin S."/>
            <person name="Barreteau H."/>
            <person name="Mengin-Lecreulx D."/>
            <person name="Blanot D."/>
        </authorList>
    </citation>
    <scope>FUNCTION</scope>
    <scope>CATALYTIC ACTIVITY</scope>
    <scope>BIOPHYSICOCHEMICAL PROPERTIES</scope>
    <source>
        <strain>NCTC 8325 / PS 47</strain>
    </source>
</reference>
<organism>
    <name type="scientific">Staphylococcus aureus (strain NCTC 8325 / PS 47)</name>
    <dbReference type="NCBI Taxonomy" id="93061"/>
    <lineage>
        <taxon>Bacteria</taxon>
        <taxon>Bacillati</taxon>
        <taxon>Bacillota</taxon>
        <taxon>Bacilli</taxon>
        <taxon>Bacillales</taxon>
        <taxon>Staphylococcaceae</taxon>
        <taxon>Staphylococcus</taxon>
    </lineage>
</organism>
<comment type="function">
    <text evidence="2">Cell wall formation (PubMed:20659527). Catalyzes the addition of glutamate to the nucleotide precursor UDP-N-acetylmuramoyl-L-alanine (UMA) (PubMed:20659527).</text>
</comment>
<comment type="catalytic activity">
    <reaction evidence="1 2">
        <text>UDP-N-acetyl-alpha-D-muramoyl-L-alanine + D-glutamate + ATP = UDP-N-acetyl-alpha-D-muramoyl-L-alanyl-D-glutamate + ADP + phosphate + H(+)</text>
        <dbReference type="Rhea" id="RHEA:16429"/>
        <dbReference type="ChEBI" id="CHEBI:15378"/>
        <dbReference type="ChEBI" id="CHEBI:29986"/>
        <dbReference type="ChEBI" id="CHEBI:30616"/>
        <dbReference type="ChEBI" id="CHEBI:43474"/>
        <dbReference type="ChEBI" id="CHEBI:83898"/>
        <dbReference type="ChEBI" id="CHEBI:83900"/>
        <dbReference type="ChEBI" id="CHEBI:456216"/>
        <dbReference type="EC" id="6.3.2.9"/>
    </reaction>
</comment>
<comment type="biophysicochemical properties">
    <kinetics>
        <KM evidence="2">0.041 mM for UDP-MurNAc-L-Ala</KM>
        <KM evidence="2">0.13 mM for D-glutamate</KM>
        <KM evidence="2">5.4 mM for ATP</KM>
        <Vmax evidence="2">35.0 umol/min/mg enzyme</Vmax>
    </kinetics>
    <phDependence>
        <text evidence="2">Optimum pH is 8.4-9.6.</text>
    </phDependence>
</comment>
<comment type="pathway">
    <text evidence="1">Cell wall biogenesis; peptidoglycan biosynthesis.</text>
</comment>
<comment type="subcellular location">
    <subcellularLocation>
        <location evidence="1">Cytoplasm</location>
    </subcellularLocation>
</comment>
<comment type="similarity">
    <text evidence="1">Belongs to the MurCDEF family.</text>
</comment>
<keyword id="KW-0067">ATP-binding</keyword>
<keyword id="KW-0131">Cell cycle</keyword>
<keyword id="KW-0132">Cell division</keyword>
<keyword id="KW-0133">Cell shape</keyword>
<keyword id="KW-0961">Cell wall biogenesis/degradation</keyword>
<keyword id="KW-0963">Cytoplasm</keyword>
<keyword id="KW-0436">Ligase</keyword>
<keyword id="KW-0547">Nucleotide-binding</keyword>
<keyword id="KW-0573">Peptidoglycan synthesis</keyword>
<keyword id="KW-1185">Reference proteome</keyword>
<sequence>MLNYTGLENKNVLVVGLAKSGYEAAKLLSKLGANVTVNDGKDLSQDAHAKDLESMGISVVSGSHPLTLLDNNPIIVKNPGIPYTVSIIDEAVKRGLKILTEVELSYLISEAPIIAVTGTNGKTTVTSLIGDMFKKSRLTGRLSGNIGYVASKVAQEVKPTDYLVTELSSFQLLGIEKYKPHIAIITNIYSAHLDYHENLENYQNAKKQIYKNQTEEDYLICNYHQRQVIESEELKAKTLYFSTQQEVDGIYIKDGFIVYKGVRIINTEDLVLPGEHNLENILAAVLACILAGVPIKAIIDSLTTFSGIEHRLQYVGTNRTNKYYNDSKATNTLATQFALNSFNQPIIWLCGGLDRGNEFDELIPYMENVRAMVVFGQTKAKFAKLGNSQGKSVIEANNVEDAVDKVQDIIEPNDVVLLSPACASWDQYSTFEERGEKFIERFRAHLPSY</sequence>